<feature type="chain" id="PRO_1000212454" description="Ribosomal RNA large subunit methyltransferase H">
    <location>
        <begin position="1"/>
        <end position="154"/>
    </location>
</feature>
<feature type="binding site" evidence="1">
    <location>
        <position position="103"/>
    </location>
    <ligand>
        <name>S-adenosyl-L-methionine</name>
        <dbReference type="ChEBI" id="CHEBI:59789"/>
    </ligand>
</feature>
<keyword id="KW-0963">Cytoplasm</keyword>
<keyword id="KW-0489">Methyltransferase</keyword>
<keyword id="KW-1185">Reference proteome</keyword>
<keyword id="KW-0698">rRNA processing</keyword>
<keyword id="KW-0949">S-adenosyl-L-methionine</keyword>
<keyword id="KW-0808">Transferase</keyword>
<organism>
    <name type="scientific">Gemmatimonas aurantiaca (strain DSM 14586 / JCM 11422 / NBRC 100505 / T-27)</name>
    <dbReference type="NCBI Taxonomy" id="379066"/>
    <lineage>
        <taxon>Bacteria</taxon>
        <taxon>Pseudomonadati</taxon>
        <taxon>Gemmatimonadota</taxon>
        <taxon>Gemmatimonadia</taxon>
        <taxon>Gemmatimonadales</taxon>
        <taxon>Gemmatimonadaceae</taxon>
        <taxon>Gemmatimonas</taxon>
    </lineage>
</organism>
<evidence type="ECO:0000255" key="1">
    <source>
        <dbReference type="HAMAP-Rule" id="MF_00658"/>
    </source>
</evidence>
<sequence>MRVALLVIGRPRHAGLADAIRDYEGRAAHYWPLDVIEVKEEPGRNLSADVVREREAERLVARLPADAVVVACDPGGVTMDSAQFARWLQEQRESARNVAFVIGGAHGLGPAVRERANRRLSLAPWTLPHEVARMVMAEQLYRAGTIIRGEPYHK</sequence>
<gene>
    <name evidence="1" type="primary">rlmH</name>
    <name type="ordered locus">GAU_1595</name>
</gene>
<dbReference type="EC" id="2.1.1.177" evidence="1"/>
<dbReference type="EMBL" id="AP009153">
    <property type="protein sequence ID" value="BAH38637.1"/>
    <property type="molecule type" value="Genomic_DNA"/>
</dbReference>
<dbReference type="RefSeq" id="WP_012683084.1">
    <property type="nucleotide sequence ID" value="NC_012489.1"/>
</dbReference>
<dbReference type="SMR" id="C1A8S7"/>
<dbReference type="STRING" id="379066.GAU_1595"/>
<dbReference type="KEGG" id="gau:GAU_1595"/>
<dbReference type="eggNOG" id="COG1576">
    <property type="taxonomic scope" value="Bacteria"/>
</dbReference>
<dbReference type="HOGENOM" id="CLU_100552_1_0_0"/>
<dbReference type="OrthoDB" id="9806643at2"/>
<dbReference type="Proteomes" id="UP000002209">
    <property type="component" value="Chromosome"/>
</dbReference>
<dbReference type="GO" id="GO:0005737">
    <property type="term" value="C:cytoplasm"/>
    <property type="evidence" value="ECO:0007669"/>
    <property type="project" value="UniProtKB-SubCell"/>
</dbReference>
<dbReference type="GO" id="GO:0070038">
    <property type="term" value="F:rRNA (pseudouridine-N3-)-methyltransferase activity"/>
    <property type="evidence" value="ECO:0007669"/>
    <property type="project" value="UniProtKB-UniRule"/>
</dbReference>
<dbReference type="CDD" id="cd18081">
    <property type="entry name" value="RlmH-like"/>
    <property type="match status" value="1"/>
</dbReference>
<dbReference type="Gene3D" id="3.40.1280.10">
    <property type="match status" value="1"/>
</dbReference>
<dbReference type="HAMAP" id="MF_00658">
    <property type="entry name" value="23SrRNA_methyltr_H"/>
    <property type="match status" value="1"/>
</dbReference>
<dbReference type="InterPro" id="IPR029028">
    <property type="entry name" value="Alpha/beta_knot_MTases"/>
</dbReference>
<dbReference type="InterPro" id="IPR003742">
    <property type="entry name" value="RlmH-like"/>
</dbReference>
<dbReference type="InterPro" id="IPR029026">
    <property type="entry name" value="tRNA_m1G_MTases_N"/>
</dbReference>
<dbReference type="PANTHER" id="PTHR33603">
    <property type="entry name" value="METHYLTRANSFERASE"/>
    <property type="match status" value="1"/>
</dbReference>
<dbReference type="PANTHER" id="PTHR33603:SF1">
    <property type="entry name" value="RIBOSOMAL RNA LARGE SUBUNIT METHYLTRANSFERASE H"/>
    <property type="match status" value="1"/>
</dbReference>
<dbReference type="Pfam" id="PF02590">
    <property type="entry name" value="SPOUT_MTase"/>
    <property type="match status" value="1"/>
</dbReference>
<dbReference type="PIRSF" id="PIRSF004505">
    <property type="entry name" value="MT_bac"/>
    <property type="match status" value="1"/>
</dbReference>
<dbReference type="SUPFAM" id="SSF75217">
    <property type="entry name" value="alpha/beta knot"/>
    <property type="match status" value="1"/>
</dbReference>
<reference key="1">
    <citation type="submission" date="2006-03" db="EMBL/GenBank/DDBJ databases">
        <title>Complete genome sequence of Gemmatimonas aurantiaca T-27 that represents a novel phylum Gemmatimonadetes.</title>
        <authorList>
            <person name="Takasaki K."/>
            <person name="Ichikawa N."/>
            <person name="Miura H."/>
            <person name="Matsushita S."/>
            <person name="Watanabe Y."/>
            <person name="Oguchi A."/>
            <person name="Ankai A."/>
            <person name="Yashiro I."/>
            <person name="Takahashi M."/>
            <person name="Terui Y."/>
            <person name="Fukui S."/>
            <person name="Yokoyama H."/>
            <person name="Tanikawa S."/>
            <person name="Hanada S."/>
            <person name="Kamagata Y."/>
            <person name="Fujita N."/>
        </authorList>
    </citation>
    <scope>NUCLEOTIDE SEQUENCE [LARGE SCALE GENOMIC DNA]</scope>
    <source>
        <strain>DSM 14586 / JCM 11422 / NBRC 100505 / T-27</strain>
    </source>
</reference>
<proteinExistence type="inferred from homology"/>
<comment type="function">
    <text evidence="1">Specifically methylates the pseudouridine at position 1915 (m3Psi1915) in 23S rRNA.</text>
</comment>
<comment type="catalytic activity">
    <reaction evidence="1">
        <text>pseudouridine(1915) in 23S rRNA + S-adenosyl-L-methionine = N(3)-methylpseudouridine(1915) in 23S rRNA + S-adenosyl-L-homocysteine + H(+)</text>
        <dbReference type="Rhea" id="RHEA:42752"/>
        <dbReference type="Rhea" id="RHEA-COMP:10221"/>
        <dbReference type="Rhea" id="RHEA-COMP:10222"/>
        <dbReference type="ChEBI" id="CHEBI:15378"/>
        <dbReference type="ChEBI" id="CHEBI:57856"/>
        <dbReference type="ChEBI" id="CHEBI:59789"/>
        <dbReference type="ChEBI" id="CHEBI:65314"/>
        <dbReference type="ChEBI" id="CHEBI:74486"/>
        <dbReference type="EC" id="2.1.1.177"/>
    </reaction>
</comment>
<comment type="subunit">
    <text evidence="1">Homodimer.</text>
</comment>
<comment type="subcellular location">
    <subcellularLocation>
        <location evidence="1">Cytoplasm</location>
    </subcellularLocation>
</comment>
<comment type="similarity">
    <text evidence="1">Belongs to the RNA methyltransferase RlmH family.</text>
</comment>
<name>RLMH_GEMAT</name>
<accession>C1A8S7</accession>
<protein>
    <recommendedName>
        <fullName evidence="1">Ribosomal RNA large subunit methyltransferase H</fullName>
        <ecNumber evidence="1">2.1.1.177</ecNumber>
    </recommendedName>
    <alternativeName>
        <fullName evidence="1">23S rRNA (pseudouridine1915-N3)-methyltransferase</fullName>
    </alternativeName>
    <alternativeName>
        <fullName evidence="1">23S rRNA m3Psi1915 methyltransferase</fullName>
    </alternativeName>
    <alternativeName>
        <fullName evidence="1">rRNA (pseudouridine-N3-)-methyltransferase RlmH</fullName>
    </alternativeName>
</protein>